<dbReference type="EMBL" id="BA000019">
    <property type="protein sequence ID" value="BAB77576.1"/>
    <property type="molecule type" value="Genomic_DNA"/>
</dbReference>
<dbReference type="PIR" id="AD1813">
    <property type="entry name" value="AD1813"/>
</dbReference>
<dbReference type="RefSeq" id="WP_010994229.1">
    <property type="nucleotide sequence ID" value="NZ_CP047242.1"/>
</dbReference>
<dbReference type="SMR" id="P0A4L1"/>
<dbReference type="STRING" id="103690.gene:10492056"/>
<dbReference type="GeneID" id="58725410"/>
<dbReference type="KEGG" id="ana:alr0052"/>
<dbReference type="eggNOG" id="COG3118">
    <property type="taxonomic scope" value="Bacteria"/>
</dbReference>
<dbReference type="OrthoDB" id="530955at2"/>
<dbReference type="Proteomes" id="UP000002483">
    <property type="component" value="Chromosome"/>
</dbReference>
<dbReference type="GO" id="GO:0005737">
    <property type="term" value="C:cytoplasm"/>
    <property type="evidence" value="ECO:0007669"/>
    <property type="project" value="TreeGrafter"/>
</dbReference>
<dbReference type="GO" id="GO:0015035">
    <property type="term" value="F:protein-disulfide reductase activity"/>
    <property type="evidence" value="ECO:0007669"/>
    <property type="project" value="InterPro"/>
</dbReference>
<dbReference type="CDD" id="cd02947">
    <property type="entry name" value="TRX_family"/>
    <property type="match status" value="1"/>
</dbReference>
<dbReference type="FunFam" id="3.40.30.10:FF:000001">
    <property type="entry name" value="Thioredoxin"/>
    <property type="match status" value="1"/>
</dbReference>
<dbReference type="Gene3D" id="3.40.30.10">
    <property type="entry name" value="Glutaredoxin"/>
    <property type="match status" value="1"/>
</dbReference>
<dbReference type="InterPro" id="IPR005746">
    <property type="entry name" value="Thioredoxin"/>
</dbReference>
<dbReference type="InterPro" id="IPR036249">
    <property type="entry name" value="Thioredoxin-like_sf"/>
</dbReference>
<dbReference type="InterPro" id="IPR017937">
    <property type="entry name" value="Thioredoxin_CS"/>
</dbReference>
<dbReference type="InterPro" id="IPR013766">
    <property type="entry name" value="Thioredoxin_domain"/>
</dbReference>
<dbReference type="NCBIfam" id="NF008229">
    <property type="entry name" value="PRK10996.1"/>
    <property type="match status" value="1"/>
</dbReference>
<dbReference type="NCBIfam" id="TIGR01068">
    <property type="entry name" value="thioredoxin"/>
    <property type="match status" value="1"/>
</dbReference>
<dbReference type="PANTHER" id="PTHR45663">
    <property type="entry name" value="GEO12009P1"/>
    <property type="match status" value="1"/>
</dbReference>
<dbReference type="PANTHER" id="PTHR45663:SF11">
    <property type="entry name" value="GEO12009P1"/>
    <property type="match status" value="1"/>
</dbReference>
<dbReference type="Pfam" id="PF00085">
    <property type="entry name" value="Thioredoxin"/>
    <property type="match status" value="1"/>
</dbReference>
<dbReference type="PIRSF" id="PIRSF000077">
    <property type="entry name" value="Thioredoxin"/>
    <property type="match status" value="1"/>
</dbReference>
<dbReference type="PRINTS" id="PR00421">
    <property type="entry name" value="THIOREDOXIN"/>
</dbReference>
<dbReference type="SUPFAM" id="SSF52833">
    <property type="entry name" value="Thioredoxin-like"/>
    <property type="match status" value="1"/>
</dbReference>
<dbReference type="PROSITE" id="PS00194">
    <property type="entry name" value="THIOREDOXIN_1"/>
    <property type="match status" value="1"/>
</dbReference>
<dbReference type="PROSITE" id="PS51352">
    <property type="entry name" value="THIOREDOXIN_2"/>
    <property type="match status" value="1"/>
</dbReference>
<sequence>MSAAAQVTDSTFKQEVLDSDVPVLVDFWAPWCGPCRMVAPVVDEIAQQYEGKIKVVKVNTDENPQVASQYGIRSIPTLMIFKGGQKVDMVVGAVPKTTLSQTLEKHL</sequence>
<feature type="initiator methionine" description="Removed" evidence="1">
    <location>
        <position position="1"/>
    </location>
</feature>
<feature type="chain" id="PRO_0000120074" description="Thioredoxin 1">
    <location>
        <begin position="2"/>
        <end position="107"/>
    </location>
</feature>
<feature type="domain" description="Thioredoxin" evidence="2">
    <location>
        <begin position="2"/>
        <end position="107"/>
    </location>
</feature>
<feature type="disulfide bond" description="Redox-active" evidence="2">
    <location>
        <begin position="32"/>
        <end position="35"/>
    </location>
</feature>
<evidence type="ECO:0000250" key="1"/>
<evidence type="ECO:0000255" key="2">
    <source>
        <dbReference type="PROSITE-ProRule" id="PRU00691"/>
    </source>
</evidence>
<evidence type="ECO:0000305" key="3"/>
<name>THIO1_NOSS1</name>
<comment type="function">
    <text evidence="1">Participates in various redox reactions through the reversible oxidation of its active center dithiol to a disulfide and catalyzes dithiol-disulfide exchange reactions.</text>
</comment>
<comment type="similarity">
    <text evidence="3">Belongs to the thioredoxin family.</text>
</comment>
<protein>
    <recommendedName>
        <fullName>Thioredoxin 1</fullName>
        <shortName>Trx-1</shortName>
    </recommendedName>
    <alternativeName>
        <fullName>Thioredoxin-M</fullName>
    </alternativeName>
</protein>
<gene>
    <name type="primary">trxA</name>
    <name type="ordered locus">alr0052</name>
</gene>
<keyword id="KW-1015">Disulfide bond</keyword>
<keyword id="KW-0249">Electron transport</keyword>
<keyword id="KW-0676">Redox-active center</keyword>
<keyword id="KW-1185">Reference proteome</keyword>
<keyword id="KW-0813">Transport</keyword>
<proteinExistence type="inferred from homology"/>
<organism>
    <name type="scientific">Nostoc sp. (strain PCC 7120 / SAG 25.82 / UTEX 2576)</name>
    <dbReference type="NCBI Taxonomy" id="103690"/>
    <lineage>
        <taxon>Bacteria</taxon>
        <taxon>Bacillati</taxon>
        <taxon>Cyanobacteriota</taxon>
        <taxon>Cyanophyceae</taxon>
        <taxon>Nostocales</taxon>
        <taxon>Nostocaceae</taxon>
        <taxon>Nostoc</taxon>
    </lineage>
</organism>
<reference key="1">
    <citation type="journal article" date="2001" name="DNA Res.">
        <title>Complete genomic sequence of the filamentous nitrogen-fixing cyanobacterium Anabaena sp. strain PCC 7120.</title>
        <authorList>
            <person name="Kaneko T."/>
            <person name="Nakamura Y."/>
            <person name="Wolk C.P."/>
            <person name="Kuritz T."/>
            <person name="Sasamoto S."/>
            <person name="Watanabe A."/>
            <person name="Iriguchi M."/>
            <person name="Ishikawa A."/>
            <person name="Kawashima K."/>
            <person name="Kimura T."/>
            <person name="Kishida Y."/>
            <person name="Kohara M."/>
            <person name="Matsumoto M."/>
            <person name="Matsuno A."/>
            <person name="Muraki A."/>
            <person name="Nakazaki N."/>
            <person name="Shimpo S."/>
            <person name="Sugimoto M."/>
            <person name="Takazawa M."/>
            <person name="Yamada M."/>
            <person name="Yasuda M."/>
            <person name="Tabata S."/>
        </authorList>
    </citation>
    <scope>NUCLEOTIDE SEQUENCE [LARGE SCALE GENOMIC DNA]</scope>
    <source>
        <strain>PCC 7120 / SAG 25.82 / UTEX 2576</strain>
    </source>
</reference>
<accession>P0A4L1</accession>
<accession>P06544</accession>